<reference key="1">
    <citation type="journal article" date="2002" name="Proc. Natl. Acad. Sci. U.S.A.">
        <title>Extensive mosaic structure revealed by the complete genome sequence of uropathogenic Escherichia coli.</title>
        <authorList>
            <person name="Welch R.A."/>
            <person name="Burland V."/>
            <person name="Plunkett G. III"/>
            <person name="Redford P."/>
            <person name="Roesch P."/>
            <person name="Rasko D."/>
            <person name="Buckles E.L."/>
            <person name="Liou S.-R."/>
            <person name="Boutin A."/>
            <person name="Hackett J."/>
            <person name="Stroud D."/>
            <person name="Mayhew G.F."/>
            <person name="Rose D.J."/>
            <person name="Zhou S."/>
            <person name="Schwartz D.C."/>
            <person name="Perna N.T."/>
            <person name="Mobley H.L.T."/>
            <person name="Donnenberg M.S."/>
            <person name="Blattner F.R."/>
        </authorList>
    </citation>
    <scope>NUCLEOTIDE SEQUENCE [LARGE SCALE GENOMIC DNA]</scope>
    <source>
        <strain>CFT073 / ATCC 700928 / UPEC</strain>
    </source>
</reference>
<protein>
    <recommendedName>
        <fullName evidence="1">Dual-specificity RNA pseudouridine synthase RluA</fullName>
        <ecNumber evidence="1">5.4.99.28</ecNumber>
        <ecNumber evidence="1">5.4.99.29</ecNumber>
    </recommendedName>
    <alternativeName>
        <fullName evidence="1">23S rRNA pseudouridine(746) synthase</fullName>
    </alternativeName>
    <alternativeName>
        <fullName evidence="1">Ribosomal large subunit pseudouridine synthase A</fullName>
    </alternativeName>
    <alternativeName>
        <fullName evidence="1">rRNA pseudouridylate synthase A</fullName>
    </alternativeName>
    <alternativeName>
        <fullName evidence="1">rRNA-uridine isomerase A</fullName>
    </alternativeName>
    <alternativeName>
        <fullName evidence="1">tRNA pseudouridine(32) synthase</fullName>
    </alternativeName>
</protein>
<accession>Q8FL93</accession>
<sequence>MGMENYNPPQEPWLVVLYQDDHIMVVNKPSGLLSVPGRLEEHKDSVMTRIQRDYPQAESVHRLDMATSGVIVVALTKAAERELKRQFREREPKKQYVARVWGHPSPAEGLVDLPLICDWPNRPKQKVCYETGKPAQTEYEVVEYAADNTARVVLKPITGRSHQLRVHMLALGHPILGDRFYASPEARAMAPRLLLHAEMLTITHPAYGNSMTFKAPADF</sequence>
<feature type="initiator methionine" description="Removed" evidence="1">
    <location>
        <position position="1"/>
    </location>
</feature>
<feature type="chain" id="PRO_0000162652" description="Dual-specificity RNA pseudouridine synthase RluA">
    <location>
        <begin position="2"/>
        <end position="219"/>
    </location>
</feature>
<feature type="active site" evidence="1">
    <location>
        <position position="64"/>
    </location>
</feature>
<organism>
    <name type="scientific">Escherichia coli O6:H1 (strain CFT073 / ATCC 700928 / UPEC)</name>
    <dbReference type="NCBI Taxonomy" id="199310"/>
    <lineage>
        <taxon>Bacteria</taxon>
        <taxon>Pseudomonadati</taxon>
        <taxon>Pseudomonadota</taxon>
        <taxon>Gammaproteobacteria</taxon>
        <taxon>Enterobacterales</taxon>
        <taxon>Enterobacteriaceae</taxon>
        <taxon>Escherichia</taxon>
    </lineage>
</organism>
<evidence type="ECO:0000250" key="1">
    <source>
        <dbReference type="UniProtKB" id="P0AA37"/>
    </source>
</evidence>
<evidence type="ECO:0000305" key="2"/>
<gene>
    <name type="primary">rluA</name>
    <name type="ordered locus">c0069</name>
</gene>
<keyword id="KW-0413">Isomerase</keyword>
<keyword id="KW-1185">Reference proteome</keyword>
<keyword id="KW-0698">rRNA processing</keyword>
<keyword id="KW-0819">tRNA processing</keyword>
<proteinExistence type="inferred from homology"/>
<name>RLUA_ECOL6</name>
<comment type="function">
    <text evidence="1">Dual specificity enzyme that catalyzes the synthesis of pseudouridine from uracil-746 in 23S ribosomal RNA and from uracil-32 in the anticodon stem and loop of transfer RNAs.</text>
</comment>
<comment type="catalytic activity">
    <reaction evidence="1">
        <text>uridine(32) in tRNA = pseudouridine(32) in tRNA</text>
        <dbReference type="Rhea" id="RHEA:42544"/>
        <dbReference type="Rhea" id="RHEA-COMP:10107"/>
        <dbReference type="Rhea" id="RHEA-COMP:10108"/>
        <dbReference type="ChEBI" id="CHEBI:65314"/>
        <dbReference type="ChEBI" id="CHEBI:65315"/>
        <dbReference type="EC" id="5.4.99.28"/>
    </reaction>
</comment>
<comment type="catalytic activity">
    <reaction evidence="1">
        <text>uridine(746) in 23S rRNA = pseudouridine(746) in 23S rRNA</text>
        <dbReference type="Rhea" id="RHEA:42548"/>
        <dbReference type="Rhea" id="RHEA-COMP:10109"/>
        <dbReference type="Rhea" id="RHEA-COMP:10110"/>
        <dbReference type="ChEBI" id="CHEBI:65314"/>
        <dbReference type="ChEBI" id="CHEBI:65315"/>
        <dbReference type="EC" id="5.4.99.29"/>
    </reaction>
</comment>
<comment type="similarity">
    <text evidence="2">Belongs to the pseudouridine synthase RluA family.</text>
</comment>
<dbReference type="EC" id="5.4.99.28" evidence="1"/>
<dbReference type="EC" id="5.4.99.29" evidence="1"/>
<dbReference type="EMBL" id="AE014075">
    <property type="protein sequence ID" value="AAN78565.1"/>
    <property type="molecule type" value="Genomic_DNA"/>
</dbReference>
<dbReference type="RefSeq" id="WP_000525208.1">
    <property type="nucleotide sequence ID" value="NZ_CP051263.1"/>
</dbReference>
<dbReference type="SMR" id="Q8FL93"/>
<dbReference type="STRING" id="199310.c0069"/>
<dbReference type="GeneID" id="89519439"/>
<dbReference type="KEGG" id="ecc:c0069"/>
<dbReference type="eggNOG" id="COG0564">
    <property type="taxonomic scope" value="Bacteria"/>
</dbReference>
<dbReference type="HOGENOM" id="CLU_016902_11_1_6"/>
<dbReference type="BioCyc" id="ECOL199310:C0069-MONOMER"/>
<dbReference type="Proteomes" id="UP000001410">
    <property type="component" value="Chromosome"/>
</dbReference>
<dbReference type="GO" id="GO:0160142">
    <property type="term" value="F:23S rRNA pseudouridine(746) synthase activity"/>
    <property type="evidence" value="ECO:0007669"/>
    <property type="project" value="UniProtKB-EC"/>
</dbReference>
<dbReference type="GO" id="GO:0003723">
    <property type="term" value="F:RNA binding"/>
    <property type="evidence" value="ECO:0007669"/>
    <property type="project" value="InterPro"/>
</dbReference>
<dbReference type="GO" id="GO:0160151">
    <property type="term" value="F:tRNA pseudouridine(32) synthase activity"/>
    <property type="evidence" value="ECO:0007669"/>
    <property type="project" value="UniProtKB-EC"/>
</dbReference>
<dbReference type="GO" id="GO:0000455">
    <property type="term" value="P:enzyme-directed rRNA pseudouridine synthesis"/>
    <property type="evidence" value="ECO:0007669"/>
    <property type="project" value="TreeGrafter"/>
</dbReference>
<dbReference type="GO" id="GO:0008033">
    <property type="term" value="P:tRNA processing"/>
    <property type="evidence" value="ECO:0007669"/>
    <property type="project" value="UniProtKB-KW"/>
</dbReference>
<dbReference type="CDD" id="cd02869">
    <property type="entry name" value="PseudoU_synth_RluA_like"/>
    <property type="match status" value="1"/>
</dbReference>
<dbReference type="FunFam" id="3.30.2350.10:FF:000005">
    <property type="entry name" value="Pseudouridine synthase"/>
    <property type="match status" value="1"/>
</dbReference>
<dbReference type="Gene3D" id="3.30.2350.10">
    <property type="entry name" value="Pseudouridine synthase"/>
    <property type="match status" value="1"/>
</dbReference>
<dbReference type="InterPro" id="IPR020103">
    <property type="entry name" value="PsdUridine_synth_cat_dom_sf"/>
</dbReference>
<dbReference type="InterPro" id="IPR006224">
    <property type="entry name" value="PsdUridine_synth_RluA-like_CS"/>
</dbReference>
<dbReference type="InterPro" id="IPR006225">
    <property type="entry name" value="PsdUridine_synth_RluC/D"/>
</dbReference>
<dbReference type="InterPro" id="IPR006145">
    <property type="entry name" value="PsdUridine_synth_RsuA/RluA"/>
</dbReference>
<dbReference type="InterPro" id="IPR050188">
    <property type="entry name" value="RluA_PseudoU_synthase"/>
</dbReference>
<dbReference type="NCBIfam" id="NF007543">
    <property type="entry name" value="PRK10158.1"/>
    <property type="match status" value="1"/>
</dbReference>
<dbReference type="NCBIfam" id="TIGR00005">
    <property type="entry name" value="rluA_subfam"/>
    <property type="match status" value="1"/>
</dbReference>
<dbReference type="PANTHER" id="PTHR21600:SF91">
    <property type="entry name" value="DUAL-SPECIFICITY RNA PSEUDOURIDINE SYNTHASE RLUA"/>
    <property type="match status" value="1"/>
</dbReference>
<dbReference type="PANTHER" id="PTHR21600">
    <property type="entry name" value="MITOCHONDRIAL RNA PSEUDOURIDINE SYNTHASE"/>
    <property type="match status" value="1"/>
</dbReference>
<dbReference type="Pfam" id="PF00849">
    <property type="entry name" value="PseudoU_synth_2"/>
    <property type="match status" value="1"/>
</dbReference>
<dbReference type="SUPFAM" id="SSF55120">
    <property type="entry name" value="Pseudouridine synthase"/>
    <property type="match status" value="1"/>
</dbReference>
<dbReference type="PROSITE" id="PS01129">
    <property type="entry name" value="PSI_RLU"/>
    <property type="match status" value="1"/>
</dbReference>